<keyword id="KW-0150">Chloroplast</keyword>
<keyword id="KW-0934">Plastid</keyword>
<keyword id="KW-0687">Ribonucleoprotein</keyword>
<keyword id="KW-0689">Ribosomal protein</keyword>
<keyword id="KW-0694">RNA-binding</keyword>
<keyword id="KW-0699">rRNA-binding</keyword>
<reference key="1">
    <citation type="journal article" date="2000" name="Am. J. Bot.">
        <title>Utility of 17 chloroplast genes for inferring the phylogeny of the basal angiosperms.</title>
        <authorList>
            <person name="Graham S.W."/>
            <person name="Olmstead R.G."/>
        </authorList>
    </citation>
    <scope>NUCLEOTIDE SEQUENCE [GENOMIC DNA]</scope>
</reference>
<proteinExistence type="inferred from homology"/>
<organism>
    <name type="scientific">Dioscorea bulbifera</name>
    <name type="common">Air potato</name>
    <name type="synonym">Dioscorea latifolia</name>
    <dbReference type="NCBI Taxonomy" id="35874"/>
    <lineage>
        <taxon>Eukaryota</taxon>
        <taxon>Viridiplantae</taxon>
        <taxon>Streptophyta</taxon>
        <taxon>Embryophyta</taxon>
        <taxon>Tracheophyta</taxon>
        <taxon>Spermatophyta</taxon>
        <taxon>Magnoliopsida</taxon>
        <taxon>Liliopsida</taxon>
        <taxon>Dioscoreales</taxon>
        <taxon>Dioscoreaceae</taxon>
        <taxon>Dioscorea</taxon>
    </lineage>
</organism>
<gene>
    <name type="primary">rps7</name>
</gene>
<name>RR7_DIOBU</name>
<accession>Q9GFL8</accession>
<feature type="chain" id="PRO_0000124451" description="Small ribosomal subunit protein uS7c">
    <location>
        <begin position="1"/>
        <end position="155"/>
    </location>
</feature>
<comment type="function">
    <text evidence="1">One of the primary rRNA binding proteins, it binds directly to 16S rRNA where it nucleates assembly of the head domain of the 30S subunit.</text>
</comment>
<comment type="subunit">
    <text>Part of the 30S ribosomal subunit.</text>
</comment>
<comment type="subcellular location">
    <subcellularLocation>
        <location>Plastid</location>
        <location>Chloroplast</location>
    </subcellularLocation>
</comment>
<comment type="similarity">
    <text evidence="2">Belongs to the universal ribosomal protein uS7 family.</text>
</comment>
<geneLocation type="chloroplast"/>
<protein>
    <recommendedName>
        <fullName evidence="2">Small ribosomal subunit protein uS7c</fullName>
    </recommendedName>
    <alternativeName>
        <fullName>30S ribosomal protein S7, chloroplastic</fullName>
    </alternativeName>
</protein>
<dbReference type="EMBL" id="AF123777">
    <property type="protein sequence ID" value="AAG26110.1"/>
    <property type="molecule type" value="Genomic_DNA"/>
</dbReference>
<dbReference type="RefSeq" id="YP_009528933.1">
    <property type="nucleotide sequence ID" value="NC_039708.1"/>
</dbReference>
<dbReference type="RefSeq" id="YP_009528946.1">
    <property type="nucleotide sequence ID" value="NC_039708.1"/>
</dbReference>
<dbReference type="SMR" id="Q9GFL8"/>
<dbReference type="GeneID" id="38328499"/>
<dbReference type="GeneID" id="38328523"/>
<dbReference type="GO" id="GO:0009507">
    <property type="term" value="C:chloroplast"/>
    <property type="evidence" value="ECO:0007669"/>
    <property type="project" value="UniProtKB-SubCell"/>
</dbReference>
<dbReference type="GO" id="GO:0015935">
    <property type="term" value="C:small ribosomal subunit"/>
    <property type="evidence" value="ECO:0007669"/>
    <property type="project" value="InterPro"/>
</dbReference>
<dbReference type="GO" id="GO:0019843">
    <property type="term" value="F:rRNA binding"/>
    <property type="evidence" value="ECO:0007669"/>
    <property type="project" value="UniProtKB-UniRule"/>
</dbReference>
<dbReference type="GO" id="GO:0003735">
    <property type="term" value="F:structural constituent of ribosome"/>
    <property type="evidence" value="ECO:0007669"/>
    <property type="project" value="InterPro"/>
</dbReference>
<dbReference type="GO" id="GO:0006412">
    <property type="term" value="P:translation"/>
    <property type="evidence" value="ECO:0007669"/>
    <property type="project" value="UniProtKB-UniRule"/>
</dbReference>
<dbReference type="CDD" id="cd14871">
    <property type="entry name" value="uS7_Chloroplast"/>
    <property type="match status" value="1"/>
</dbReference>
<dbReference type="FunFam" id="1.10.455.10:FF:000001">
    <property type="entry name" value="30S ribosomal protein S7"/>
    <property type="match status" value="1"/>
</dbReference>
<dbReference type="Gene3D" id="1.10.455.10">
    <property type="entry name" value="Ribosomal protein S7 domain"/>
    <property type="match status" value="1"/>
</dbReference>
<dbReference type="HAMAP" id="MF_00480_B">
    <property type="entry name" value="Ribosomal_uS7_B"/>
    <property type="match status" value="1"/>
</dbReference>
<dbReference type="InterPro" id="IPR000235">
    <property type="entry name" value="Ribosomal_uS7"/>
</dbReference>
<dbReference type="InterPro" id="IPR005717">
    <property type="entry name" value="Ribosomal_uS7_bac/org-type"/>
</dbReference>
<dbReference type="InterPro" id="IPR020606">
    <property type="entry name" value="Ribosomal_uS7_CS"/>
</dbReference>
<dbReference type="InterPro" id="IPR023798">
    <property type="entry name" value="Ribosomal_uS7_dom"/>
</dbReference>
<dbReference type="InterPro" id="IPR036823">
    <property type="entry name" value="Ribosomal_uS7_dom_sf"/>
</dbReference>
<dbReference type="NCBIfam" id="TIGR01029">
    <property type="entry name" value="rpsG_bact"/>
    <property type="match status" value="1"/>
</dbReference>
<dbReference type="PANTHER" id="PTHR11205">
    <property type="entry name" value="RIBOSOMAL PROTEIN S7"/>
    <property type="match status" value="1"/>
</dbReference>
<dbReference type="Pfam" id="PF00177">
    <property type="entry name" value="Ribosomal_S7"/>
    <property type="match status" value="1"/>
</dbReference>
<dbReference type="PIRSF" id="PIRSF002122">
    <property type="entry name" value="RPS7p_RPS7a_RPS5e_RPS7o"/>
    <property type="match status" value="1"/>
</dbReference>
<dbReference type="SUPFAM" id="SSF47973">
    <property type="entry name" value="Ribosomal protein S7"/>
    <property type="match status" value="1"/>
</dbReference>
<dbReference type="PROSITE" id="PS00052">
    <property type="entry name" value="RIBOSOMAL_S7"/>
    <property type="match status" value="1"/>
</dbReference>
<evidence type="ECO:0000250" key="1"/>
<evidence type="ECO:0000305" key="2"/>
<sequence>MSRRGTAEEKTAKSDPIYRNRLVNMLVNRILKHGKKSLAYQIIYRTVKKIQQKTETNPLSVLRQAIRGVTPDIAVKARRVGGSTHQVPIEIGSTQGKALAIRWLLGASRKRPGRNMAFKLSSELVDAAKGSGDAIRKKEETHRMAEANRAFAHFR</sequence>